<accession>Q5M1L6</accession>
<gene>
    <name evidence="1" type="primary">leuS</name>
    <name type="ordered locus">str0220</name>
</gene>
<protein>
    <recommendedName>
        <fullName evidence="1">Leucine--tRNA ligase</fullName>
        <ecNumber evidence="1">6.1.1.4</ecNumber>
    </recommendedName>
    <alternativeName>
        <fullName evidence="1">Leucyl-tRNA synthetase</fullName>
        <shortName evidence="1">LeuRS</shortName>
    </alternativeName>
</protein>
<evidence type="ECO:0000255" key="1">
    <source>
        <dbReference type="HAMAP-Rule" id="MF_00049"/>
    </source>
</evidence>
<feature type="chain" id="PRO_1000009450" description="Leucine--tRNA ligase">
    <location>
        <begin position="1"/>
        <end position="833"/>
    </location>
</feature>
<feature type="short sequence motif" description="'HIGH' region">
    <location>
        <begin position="41"/>
        <end position="52"/>
    </location>
</feature>
<feature type="short sequence motif" description="'KMSKS' region">
    <location>
        <begin position="610"/>
        <end position="614"/>
    </location>
</feature>
<feature type="binding site" evidence="1">
    <location>
        <position position="613"/>
    </location>
    <ligand>
        <name>ATP</name>
        <dbReference type="ChEBI" id="CHEBI:30616"/>
    </ligand>
</feature>
<reference key="1">
    <citation type="journal article" date="2004" name="Nat. Biotechnol.">
        <title>Complete sequence and comparative genome analysis of the dairy bacterium Streptococcus thermophilus.</title>
        <authorList>
            <person name="Bolotin A."/>
            <person name="Quinquis B."/>
            <person name="Renault P."/>
            <person name="Sorokin A."/>
            <person name="Ehrlich S.D."/>
            <person name="Kulakauskas S."/>
            <person name="Lapidus A."/>
            <person name="Goltsman E."/>
            <person name="Mazur M."/>
            <person name="Pusch G.D."/>
            <person name="Fonstein M."/>
            <person name="Overbeek R."/>
            <person name="Kyprides N."/>
            <person name="Purnelle B."/>
            <person name="Prozzi D."/>
            <person name="Ngui K."/>
            <person name="Masuy D."/>
            <person name="Hancy F."/>
            <person name="Burteau S."/>
            <person name="Boutry M."/>
            <person name="Delcour J."/>
            <person name="Goffeau A."/>
            <person name="Hols P."/>
        </authorList>
    </citation>
    <scope>NUCLEOTIDE SEQUENCE [LARGE SCALE GENOMIC DNA]</scope>
    <source>
        <strain>CNRZ 1066</strain>
    </source>
</reference>
<keyword id="KW-0030">Aminoacyl-tRNA synthetase</keyword>
<keyword id="KW-0067">ATP-binding</keyword>
<keyword id="KW-0963">Cytoplasm</keyword>
<keyword id="KW-0436">Ligase</keyword>
<keyword id="KW-0547">Nucleotide-binding</keyword>
<keyword id="KW-0648">Protein biosynthesis</keyword>
<organism>
    <name type="scientific">Streptococcus thermophilus (strain CNRZ 1066)</name>
    <dbReference type="NCBI Taxonomy" id="299768"/>
    <lineage>
        <taxon>Bacteria</taxon>
        <taxon>Bacillati</taxon>
        <taxon>Bacillota</taxon>
        <taxon>Bacilli</taxon>
        <taxon>Lactobacillales</taxon>
        <taxon>Streptococcaceae</taxon>
        <taxon>Streptococcus</taxon>
    </lineage>
</organism>
<comment type="catalytic activity">
    <reaction evidence="1">
        <text>tRNA(Leu) + L-leucine + ATP = L-leucyl-tRNA(Leu) + AMP + diphosphate</text>
        <dbReference type="Rhea" id="RHEA:11688"/>
        <dbReference type="Rhea" id="RHEA-COMP:9613"/>
        <dbReference type="Rhea" id="RHEA-COMP:9622"/>
        <dbReference type="ChEBI" id="CHEBI:30616"/>
        <dbReference type="ChEBI" id="CHEBI:33019"/>
        <dbReference type="ChEBI" id="CHEBI:57427"/>
        <dbReference type="ChEBI" id="CHEBI:78442"/>
        <dbReference type="ChEBI" id="CHEBI:78494"/>
        <dbReference type="ChEBI" id="CHEBI:456215"/>
        <dbReference type="EC" id="6.1.1.4"/>
    </reaction>
</comment>
<comment type="subcellular location">
    <subcellularLocation>
        <location evidence="1">Cytoplasm</location>
    </subcellularLocation>
</comment>
<comment type="similarity">
    <text evidence="1">Belongs to the class-I aminoacyl-tRNA synthetase family.</text>
</comment>
<dbReference type="EC" id="6.1.1.4" evidence="1"/>
<dbReference type="EMBL" id="CP000024">
    <property type="protein sequence ID" value="AAV61834.1"/>
    <property type="molecule type" value="Genomic_DNA"/>
</dbReference>
<dbReference type="RefSeq" id="WP_002947934.1">
    <property type="nucleotide sequence ID" value="NC_006449.1"/>
</dbReference>
<dbReference type="SMR" id="Q5M1L6"/>
<dbReference type="GeneID" id="66898153"/>
<dbReference type="KEGG" id="stc:str0220"/>
<dbReference type="HOGENOM" id="CLU_004427_0_0_9"/>
<dbReference type="GO" id="GO:0005829">
    <property type="term" value="C:cytosol"/>
    <property type="evidence" value="ECO:0007669"/>
    <property type="project" value="TreeGrafter"/>
</dbReference>
<dbReference type="GO" id="GO:0002161">
    <property type="term" value="F:aminoacyl-tRNA deacylase activity"/>
    <property type="evidence" value="ECO:0007669"/>
    <property type="project" value="InterPro"/>
</dbReference>
<dbReference type="GO" id="GO:0005524">
    <property type="term" value="F:ATP binding"/>
    <property type="evidence" value="ECO:0007669"/>
    <property type="project" value="UniProtKB-UniRule"/>
</dbReference>
<dbReference type="GO" id="GO:0004823">
    <property type="term" value="F:leucine-tRNA ligase activity"/>
    <property type="evidence" value="ECO:0007669"/>
    <property type="project" value="UniProtKB-UniRule"/>
</dbReference>
<dbReference type="GO" id="GO:0006429">
    <property type="term" value="P:leucyl-tRNA aminoacylation"/>
    <property type="evidence" value="ECO:0007669"/>
    <property type="project" value="UniProtKB-UniRule"/>
</dbReference>
<dbReference type="CDD" id="cd07958">
    <property type="entry name" value="Anticodon_Ia_Leu_BEm"/>
    <property type="match status" value="1"/>
</dbReference>
<dbReference type="CDD" id="cd00812">
    <property type="entry name" value="LeuRS_core"/>
    <property type="match status" value="1"/>
</dbReference>
<dbReference type="FunFam" id="1.10.730.10:FF:000012">
    <property type="entry name" value="Leucine--tRNA ligase"/>
    <property type="match status" value="1"/>
</dbReference>
<dbReference type="FunFam" id="3.40.50.620:FF:000056">
    <property type="entry name" value="Leucine--tRNA ligase"/>
    <property type="match status" value="1"/>
</dbReference>
<dbReference type="FunFam" id="3.40.50.620:FF:000077">
    <property type="entry name" value="Leucine--tRNA ligase"/>
    <property type="match status" value="1"/>
</dbReference>
<dbReference type="FunFam" id="1.10.730.10:FF:000011">
    <property type="entry name" value="Leucine--tRNA ligase chloroplastic/mitochondrial"/>
    <property type="match status" value="1"/>
</dbReference>
<dbReference type="Gene3D" id="3.40.50.620">
    <property type="entry name" value="HUPs"/>
    <property type="match status" value="2"/>
</dbReference>
<dbReference type="Gene3D" id="1.10.730.10">
    <property type="entry name" value="Isoleucyl-tRNA Synthetase, Domain 1"/>
    <property type="match status" value="1"/>
</dbReference>
<dbReference type="Gene3D" id="3.90.740.10">
    <property type="entry name" value="Valyl/Leucyl/Isoleucyl-tRNA synthetase, editing domain"/>
    <property type="match status" value="1"/>
</dbReference>
<dbReference type="HAMAP" id="MF_00049_B">
    <property type="entry name" value="Leu_tRNA_synth_B"/>
    <property type="match status" value="1"/>
</dbReference>
<dbReference type="InterPro" id="IPR001412">
    <property type="entry name" value="aa-tRNA-synth_I_CS"/>
</dbReference>
<dbReference type="InterPro" id="IPR002300">
    <property type="entry name" value="aa-tRNA-synth_Ia"/>
</dbReference>
<dbReference type="InterPro" id="IPR002302">
    <property type="entry name" value="Leu-tRNA-ligase"/>
</dbReference>
<dbReference type="InterPro" id="IPR025709">
    <property type="entry name" value="Leu_tRNA-synth_edit"/>
</dbReference>
<dbReference type="InterPro" id="IPR013155">
    <property type="entry name" value="M/V/L/I-tRNA-synth_anticd-bd"/>
</dbReference>
<dbReference type="InterPro" id="IPR015413">
    <property type="entry name" value="Methionyl/Leucyl_tRNA_Synth"/>
</dbReference>
<dbReference type="InterPro" id="IPR014729">
    <property type="entry name" value="Rossmann-like_a/b/a_fold"/>
</dbReference>
<dbReference type="InterPro" id="IPR009080">
    <property type="entry name" value="tRNAsynth_Ia_anticodon-bd"/>
</dbReference>
<dbReference type="InterPro" id="IPR009008">
    <property type="entry name" value="Val/Leu/Ile-tRNA-synth_edit"/>
</dbReference>
<dbReference type="NCBIfam" id="TIGR00396">
    <property type="entry name" value="leuS_bact"/>
    <property type="match status" value="1"/>
</dbReference>
<dbReference type="PANTHER" id="PTHR43740:SF2">
    <property type="entry name" value="LEUCINE--TRNA LIGASE, MITOCHONDRIAL"/>
    <property type="match status" value="1"/>
</dbReference>
<dbReference type="PANTHER" id="PTHR43740">
    <property type="entry name" value="LEUCYL-TRNA SYNTHETASE"/>
    <property type="match status" value="1"/>
</dbReference>
<dbReference type="Pfam" id="PF08264">
    <property type="entry name" value="Anticodon_1"/>
    <property type="match status" value="1"/>
</dbReference>
<dbReference type="Pfam" id="PF00133">
    <property type="entry name" value="tRNA-synt_1"/>
    <property type="match status" value="2"/>
</dbReference>
<dbReference type="Pfam" id="PF13603">
    <property type="entry name" value="tRNA-synt_1_2"/>
    <property type="match status" value="1"/>
</dbReference>
<dbReference type="Pfam" id="PF09334">
    <property type="entry name" value="tRNA-synt_1g"/>
    <property type="match status" value="1"/>
</dbReference>
<dbReference type="PRINTS" id="PR00985">
    <property type="entry name" value="TRNASYNTHLEU"/>
</dbReference>
<dbReference type="SUPFAM" id="SSF47323">
    <property type="entry name" value="Anticodon-binding domain of a subclass of class I aminoacyl-tRNA synthetases"/>
    <property type="match status" value="1"/>
</dbReference>
<dbReference type="SUPFAM" id="SSF52374">
    <property type="entry name" value="Nucleotidylyl transferase"/>
    <property type="match status" value="1"/>
</dbReference>
<dbReference type="SUPFAM" id="SSF50677">
    <property type="entry name" value="ValRS/IleRS/LeuRS editing domain"/>
    <property type="match status" value="1"/>
</dbReference>
<dbReference type="PROSITE" id="PS00178">
    <property type="entry name" value="AA_TRNA_LIGASE_I"/>
    <property type="match status" value="1"/>
</dbReference>
<sequence length="833" mass="94422">MSFYNHKEIEPKWQKYWADHHTFKTGTDASKPKFYALDMFPYPSGAGLHVGHPEGYTATDILSRFKRAQGYNVLHPMGWDAFGLPAEQYAMDTGNDPADFTAENIANFKRQINALGFSYDWDREINTTDPNYYKWTQWIFTKLYEKGLAYEAEVPVNWVEELGTAIANEEVLPDGTSERGGYPVVRKPMRQWMLKITAYAERLLNDLDELDWPESIKDMQRNWIGKSTGANVTFKVKGTDKEFTVFTTRPDTLFGATFTVLAPEHDLVDAITSPEQAEAVANYKHQASLKSDLARTDLAKEKTGVWTGAYAINPVNGREIPIWIADYVLASYGTGAVMAVPAHDERDWEFAKQFGLPIVEVLEGGNVEEAAYTEDGPHVNSDFLNGLNKEEAIAKIVAWLEEKGFGQEKITYRLRDWLFSRQRYWGEPIPIIHWEDGTSTAVPESELPLVLPVTKDIRPSGTGESPLANLTDWLEVTREDGVKGRRETNTMPQWAGSSWYYLRYIDPHNTEKLADEDLLKQWLPVDIYVGGAEHAVLHLLYARFWHKFLYDLGVVPTKEPFQKLFNQGMILGTSYRDHRGALVATDKVEKRDGSFFHVETGEELEQAPAKMSKSLKNVVNPDDVVEQYGADTLRVYEMFMGPLDASIAWSEEGLEGSRKFLDRVYRLITSKEIVAENNGGLDKVYNETVKSVTEQIELMKFNTAIAQLMVFVNAANKEDKLYVDYAKGFVQLIAPFAPHLAEELWQTLTATGESISYVAWPTWDESKLVEDEIEIVVQIKGKVRAKLMVAKDLSREELQEVALADEKVKAEIDGKEIVKVIAVPNKLVNIVVK</sequence>
<proteinExistence type="inferred from homology"/>
<name>SYL_STRT1</name>